<accession>Q4J932</accession>
<keyword id="KW-0068">Autocatalytic cleavage</keyword>
<keyword id="KW-0210">Decarboxylase</keyword>
<keyword id="KW-0456">Lyase</keyword>
<keyword id="KW-0620">Polyamine biosynthesis</keyword>
<keyword id="KW-0670">Pyruvate</keyword>
<keyword id="KW-1185">Reference proteome</keyword>
<keyword id="KW-0704">Schiff base</keyword>
<keyword id="KW-0865">Zymogen</keyword>
<name>ARGDC_SULAC</name>
<protein>
    <recommendedName>
        <fullName evidence="1">Arginine decarboxylase proenzyme</fullName>
        <shortName evidence="1">ADC</shortName>
        <shortName evidence="1">ArgDC</shortName>
        <ecNumber evidence="1">4.1.1.19</ecNumber>
    </recommendedName>
    <alternativeName>
        <fullName evidence="1">Pyruvoyl-dependent arginine decarboxylase</fullName>
    </alternativeName>
    <component>
        <recommendedName>
            <fullName evidence="1">Arginine decarboxylase beta chain</fullName>
        </recommendedName>
    </component>
    <component>
        <recommendedName>
            <fullName evidence="1">Arginine decarboxylase alpha chain</fullName>
        </recommendedName>
    </component>
</protein>
<gene>
    <name type="ordered locus">Saci_1363</name>
</gene>
<feature type="chain" id="PRO_0000041966" description="Arginine decarboxylase beta chain" evidence="1">
    <location>
        <begin position="1"/>
        <end position="77"/>
    </location>
</feature>
<feature type="chain" id="PRO_0000041967" description="Arginine decarboxylase alpha chain" evidence="1">
    <location>
        <begin position="78"/>
        <end position="130"/>
    </location>
</feature>
<feature type="active site" description="Schiff-base intermediate with substrate; via pyruvic acid" evidence="1">
    <location>
        <position position="78"/>
    </location>
</feature>
<feature type="active site" description="Proton acceptor; for processing activity" evidence="1">
    <location>
        <position position="83"/>
    </location>
</feature>
<feature type="active site" description="Proton donor; for catalytic activity" evidence="1">
    <location>
        <position position="98"/>
    </location>
</feature>
<feature type="site" description="Cleavage (non-hydrolytic); by autolysis" evidence="1">
    <location>
        <begin position="77"/>
        <end position="78"/>
    </location>
</feature>
<feature type="modified residue" description="Pyruvic acid (Ser); by autocatalysis" evidence="1">
    <location>
        <position position="78"/>
    </location>
</feature>
<dbReference type="EC" id="4.1.1.19" evidence="1"/>
<dbReference type="EMBL" id="CP000077">
    <property type="protein sequence ID" value="AAY80698.1"/>
    <property type="molecule type" value="Genomic_DNA"/>
</dbReference>
<dbReference type="RefSeq" id="WP_011278200.1">
    <property type="nucleotide sequence ID" value="NC_007181.1"/>
</dbReference>
<dbReference type="SMR" id="Q4J932"/>
<dbReference type="STRING" id="330779.Saci_1363"/>
<dbReference type="GeneID" id="14551866"/>
<dbReference type="KEGG" id="sai:Saci_1363"/>
<dbReference type="PATRIC" id="fig|330779.12.peg.1316"/>
<dbReference type="eggNOG" id="arCOG00279">
    <property type="taxonomic scope" value="Archaea"/>
</dbReference>
<dbReference type="HOGENOM" id="CLU_125470_2_1_2"/>
<dbReference type="UniPathway" id="UPA00186">
    <property type="reaction ID" value="UER00284"/>
</dbReference>
<dbReference type="Proteomes" id="UP000001018">
    <property type="component" value="Chromosome"/>
</dbReference>
<dbReference type="GO" id="GO:0005829">
    <property type="term" value="C:cytosol"/>
    <property type="evidence" value="ECO:0007669"/>
    <property type="project" value="TreeGrafter"/>
</dbReference>
<dbReference type="GO" id="GO:0008792">
    <property type="term" value="F:arginine decarboxylase activity"/>
    <property type="evidence" value="ECO:0007669"/>
    <property type="project" value="UniProtKB-UniRule"/>
</dbReference>
<dbReference type="GO" id="GO:0006527">
    <property type="term" value="P:arginine catabolic process"/>
    <property type="evidence" value="ECO:0007669"/>
    <property type="project" value="UniProtKB-UniRule"/>
</dbReference>
<dbReference type="GO" id="GO:0006596">
    <property type="term" value="P:polyamine biosynthetic process"/>
    <property type="evidence" value="ECO:0007669"/>
    <property type="project" value="UniProtKB-UniRule"/>
</dbReference>
<dbReference type="FunFam" id="3.60.90.10:FF:000005">
    <property type="entry name" value="Arginine decarboxylase proenzyme"/>
    <property type="match status" value="1"/>
</dbReference>
<dbReference type="Gene3D" id="3.60.90.10">
    <property type="entry name" value="S-adenosylmethionine decarboxylase"/>
    <property type="match status" value="1"/>
</dbReference>
<dbReference type="HAMAP" id="MF_00464">
    <property type="entry name" value="AdoMetDC_1"/>
    <property type="match status" value="1"/>
</dbReference>
<dbReference type="HAMAP" id="MF_01298">
    <property type="entry name" value="ArgDC"/>
    <property type="match status" value="1"/>
</dbReference>
<dbReference type="InterPro" id="IPR003826">
    <property type="entry name" value="AdoMetDC_fam_prok"/>
</dbReference>
<dbReference type="InterPro" id="IPR027549">
    <property type="entry name" value="ArgDC"/>
</dbReference>
<dbReference type="InterPro" id="IPR016067">
    <property type="entry name" value="S-AdoMet_deCO2ase_core"/>
</dbReference>
<dbReference type="InterPro" id="IPR017716">
    <property type="entry name" value="S-AdoMet_deCOase_pro-enz"/>
</dbReference>
<dbReference type="NCBIfam" id="TIGR03330">
    <property type="entry name" value="SAM_DCase_Bsu"/>
    <property type="match status" value="1"/>
</dbReference>
<dbReference type="PANTHER" id="PTHR33866">
    <property type="entry name" value="S-ADENOSYLMETHIONINE DECARBOXYLASE PROENZYME"/>
    <property type="match status" value="1"/>
</dbReference>
<dbReference type="PANTHER" id="PTHR33866:SF2">
    <property type="entry name" value="S-ADENOSYLMETHIONINE DECARBOXYLASE PROENZYME"/>
    <property type="match status" value="1"/>
</dbReference>
<dbReference type="Pfam" id="PF02675">
    <property type="entry name" value="AdoMet_dc"/>
    <property type="match status" value="1"/>
</dbReference>
<dbReference type="SUPFAM" id="SSF56276">
    <property type="entry name" value="S-adenosylmethionine decarboxylase"/>
    <property type="match status" value="1"/>
</dbReference>
<organism>
    <name type="scientific">Sulfolobus acidocaldarius (strain ATCC 33909 / DSM 639 / JCM 8929 / NBRC 15157 / NCIMB 11770)</name>
    <dbReference type="NCBI Taxonomy" id="330779"/>
    <lineage>
        <taxon>Archaea</taxon>
        <taxon>Thermoproteota</taxon>
        <taxon>Thermoprotei</taxon>
        <taxon>Sulfolobales</taxon>
        <taxon>Sulfolobaceae</taxon>
        <taxon>Sulfolobus</taxon>
    </lineage>
</organism>
<proteinExistence type="inferred from homology"/>
<reference key="1">
    <citation type="journal article" date="2005" name="J. Bacteriol.">
        <title>The genome of Sulfolobus acidocaldarius, a model organism of the Crenarchaeota.</title>
        <authorList>
            <person name="Chen L."/>
            <person name="Bruegger K."/>
            <person name="Skovgaard M."/>
            <person name="Redder P."/>
            <person name="She Q."/>
            <person name="Torarinsson E."/>
            <person name="Greve B."/>
            <person name="Awayez M."/>
            <person name="Zibat A."/>
            <person name="Klenk H.-P."/>
            <person name="Garrett R.A."/>
        </authorList>
    </citation>
    <scope>NUCLEOTIDE SEQUENCE [LARGE SCALE GENOMIC DNA]</scope>
    <source>
        <strain>ATCC 33909 / DSM 639 / JCM 8929 / NBRC 15157 / NCIMB 11770</strain>
    </source>
</reference>
<evidence type="ECO:0000255" key="1">
    <source>
        <dbReference type="HAMAP-Rule" id="MF_01298"/>
    </source>
</evidence>
<comment type="function">
    <text evidence="1">Specifically catalyzes the decarboxylation of L-arginine to agmatine. Has no S-adenosylmethionine decarboxylase (AdoMetDC) activity.</text>
</comment>
<comment type="catalytic activity">
    <reaction evidence="1">
        <text>L-arginine + H(+) = agmatine + CO2</text>
        <dbReference type="Rhea" id="RHEA:17641"/>
        <dbReference type="ChEBI" id="CHEBI:15378"/>
        <dbReference type="ChEBI" id="CHEBI:16526"/>
        <dbReference type="ChEBI" id="CHEBI:32682"/>
        <dbReference type="ChEBI" id="CHEBI:58145"/>
        <dbReference type="EC" id="4.1.1.19"/>
    </reaction>
</comment>
<comment type="cofactor">
    <cofactor evidence="1">
        <name>pyruvate</name>
        <dbReference type="ChEBI" id="CHEBI:15361"/>
    </cofactor>
    <text evidence="1">Binds 1 pyruvoyl group covalently per subunit.</text>
</comment>
<comment type="pathway">
    <text evidence="1">Amine and polyamine biosynthesis; agmatine biosynthesis; agmatine from L-arginine: step 1/1.</text>
</comment>
<comment type="subunit">
    <text evidence="1">Heterooctamer of four alpha and four beta chains arranged as a tetramer of alpha/beta heterodimers.</text>
</comment>
<comment type="PTM">
    <text evidence="1">Is synthesized initially as an inactive proenzyme. Formation of the active enzyme involves a self-maturation process in which the active site pyruvoyl group is generated from an internal serine residue via an autocatalytic post-translational modification. Two non-identical subunits are generated from the proenzyme in this reaction, and the pyruvate is formed at the N-terminus of the alpha chain, which is derived from the carboxyl end of the proenzyme. The post-translation cleavage follows an unusual pathway, termed non-hydrolytic serinolysis, in which the side chain hydroxyl group of the serine supplies its oxygen atom to form the C-terminus of the beta chain, while the remainder of the serine residue undergoes an oxidative deamination to produce ammonia and the pyruvoyl group blocking the N-terminus of the alpha chain.</text>
</comment>
<comment type="similarity">
    <text evidence="1">Belongs to the prokaryotic AdoMetDC family. Type 1 subfamily.</text>
</comment>
<sequence length="130" mass="14623">MSQQLSSQTPSNQDRIVGKHVFGNLYDIDDKLLMDKDLLEGLVLEAVKIAKMNLVEIKSWSFGGKKGGVSVIALVEESHIALHTWNEYKYATLDVYTCGVDSNPQAAFEFIVSNLKPKRHQMFFADRSSE</sequence>